<feature type="chain" id="PRO_1000144530" description="Large ribosomal subunit protein uL23">
    <location>
        <begin position="1"/>
        <end position="96"/>
    </location>
</feature>
<reference key="1">
    <citation type="submission" date="2008-10" db="EMBL/GenBank/DDBJ databases">
        <title>Genome sequence of Bacillus cereus B4264.</title>
        <authorList>
            <person name="Dodson R.J."/>
            <person name="Durkin A.S."/>
            <person name="Rosovitz M.J."/>
            <person name="Rasko D.A."/>
            <person name="Hoffmaster A."/>
            <person name="Ravel J."/>
            <person name="Sutton G."/>
        </authorList>
    </citation>
    <scope>NUCLEOTIDE SEQUENCE [LARGE SCALE GENOMIC DNA]</scope>
    <source>
        <strain>B4264</strain>
    </source>
</reference>
<organism>
    <name type="scientific">Bacillus cereus (strain B4264)</name>
    <dbReference type="NCBI Taxonomy" id="405532"/>
    <lineage>
        <taxon>Bacteria</taxon>
        <taxon>Bacillati</taxon>
        <taxon>Bacillota</taxon>
        <taxon>Bacilli</taxon>
        <taxon>Bacillales</taxon>
        <taxon>Bacillaceae</taxon>
        <taxon>Bacillus</taxon>
        <taxon>Bacillus cereus group</taxon>
    </lineage>
</organism>
<keyword id="KW-0687">Ribonucleoprotein</keyword>
<keyword id="KW-0689">Ribosomal protein</keyword>
<keyword id="KW-0694">RNA-binding</keyword>
<keyword id="KW-0699">rRNA-binding</keyword>
<sequence length="96" mass="11114">MRDPRDIIKRPVITERSMEMMAEKKYTFDVDVKSNKTEVKDALEAIFGVKVEKVNIMNYKPKAKRVGRHAGFTSRRRKAIVKLTADSKEIEIFQGV</sequence>
<gene>
    <name evidence="1" type="primary">rplW</name>
    <name type="ordered locus">BCB4264_A0133</name>
</gene>
<proteinExistence type="inferred from homology"/>
<comment type="function">
    <text evidence="1">One of the early assembly proteins it binds 23S rRNA. One of the proteins that surrounds the polypeptide exit tunnel on the outside of the ribosome. Forms the main docking site for trigger factor binding to the ribosome.</text>
</comment>
<comment type="subunit">
    <text evidence="1">Part of the 50S ribosomal subunit. Contacts protein L29, and trigger factor when it is bound to the ribosome.</text>
</comment>
<comment type="similarity">
    <text evidence="1">Belongs to the universal ribosomal protein uL23 family.</text>
</comment>
<accession>B7HJ50</accession>
<protein>
    <recommendedName>
        <fullName evidence="1">Large ribosomal subunit protein uL23</fullName>
    </recommendedName>
    <alternativeName>
        <fullName evidence="2">50S ribosomal protein L23</fullName>
    </alternativeName>
</protein>
<dbReference type="EMBL" id="CP001176">
    <property type="protein sequence ID" value="ACK60186.1"/>
    <property type="molecule type" value="Genomic_DNA"/>
</dbReference>
<dbReference type="RefSeq" id="WP_001205558.1">
    <property type="nucleotide sequence ID" value="NZ_VEHB01000017.1"/>
</dbReference>
<dbReference type="SMR" id="B7HJ50"/>
<dbReference type="GeneID" id="93010941"/>
<dbReference type="KEGG" id="bcb:BCB4264_A0133"/>
<dbReference type="HOGENOM" id="CLU_037562_3_2_9"/>
<dbReference type="Proteomes" id="UP000007096">
    <property type="component" value="Chromosome"/>
</dbReference>
<dbReference type="GO" id="GO:1990904">
    <property type="term" value="C:ribonucleoprotein complex"/>
    <property type="evidence" value="ECO:0007669"/>
    <property type="project" value="UniProtKB-KW"/>
</dbReference>
<dbReference type="GO" id="GO:0005840">
    <property type="term" value="C:ribosome"/>
    <property type="evidence" value="ECO:0007669"/>
    <property type="project" value="UniProtKB-KW"/>
</dbReference>
<dbReference type="GO" id="GO:0019843">
    <property type="term" value="F:rRNA binding"/>
    <property type="evidence" value="ECO:0007669"/>
    <property type="project" value="UniProtKB-UniRule"/>
</dbReference>
<dbReference type="GO" id="GO:0003735">
    <property type="term" value="F:structural constituent of ribosome"/>
    <property type="evidence" value="ECO:0007669"/>
    <property type="project" value="InterPro"/>
</dbReference>
<dbReference type="GO" id="GO:0006412">
    <property type="term" value="P:translation"/>
    <property type="evidence" value="ECO:0007669"/>
    <property type="project" value="UniProtKB-UniRule"/>
</dbReference>
<dbReference type="FunFam" id="3.30.70.330:FF:000001">
    <property type="entry name" value="50S ribosomal protein L23"/>
    <property type="match status" value="1"/>
</dbReference>
<dbReference type="Gene3D" id="3.30.70.330">
    <property type="match status" value="1"/>
</dbReference>
<dbReference type="HAMAP" id="MF_01369_B">
    <property type="entry name" value="Ribosomal_uL23_B"/>
    <property type="match status" value="1"/>
</dbReference>
<dbReference type="InterPro" id="IPR012677">
    <property type="entry name" value="Nucleotide-bd_a/b_plait_sf"/>
</dbReference>
<dbReference type="InterPro" id="IPR013025">
    <property type="entry name" value="Ribosomal_uL23-like"/>
</dbReference>
<dbReference type="InterPro" id="IPR012678">
    <property type="entry name" value="Ribosomal_uL23/eL15/eS24_sf"/>
</dbReference>
<dbReference type="InterPro" id="IPR001014">
    <property type="entry name" value="Ribosomal_uL23_CS"/>
</dbReference>
<dbReference type="NCBIfam" id="NF004363">
    <property type="entry name" value="PRK05738.2-4"/>
    <property type="match status" value="1"/>
</dbReference>
<dbReference type="PANTHER" id="PTHR11620">
    <property type="entry name" value="60S RIBOSOMAL PROTEIN L23A"/>
    <property type="match status" value="1"/>
</dbReference>
<dbReference type="Pfam" id="PF00276">
    <property type="entry name" value="Ribosomal_L23"/>
    <property type="match status" value="1"/>
</dbReference>
<dbReference type="SUPFAM" id="SSF54189">
    <property type="entry name" value="Ribosomal proteins S24e, L23 and L15e"/>
    <property type="match status" value="1"/>
</dbReference>
<dbReference type="PROSITE" id="PS00050">
    <property type="entry name" value="RIBOSOMAL_L23"/>
    <property type="match status" value="1"/>
</dbReference>
<name>RL23_BACC4</name>
<evidence type="ECO:0000255" key="1">
    <source>
        <dbReference type="HAMAP-Rule" id="MF_01369"/>
    </source>
</evidence>
<evidence type="ECO:0000305" key="2"/>